<keyword id="KW-0975">Bacterial flagellum</keyword>
<gene>
    <name evidence="2" type="primary">flgB</name>
    <name type="ordered locus">Rsph17029_1719</name>
</gene>
<dbReference type="EMBL" id="CP000577">
    <property type="protein sequence ID" value="ABN76829.1"/>
    <property type="molecule type" value="Genomic_DNA"/>
</dbReference>
<dbReference type="RefSeq" id="WP_002720232.1">
    <property type="nucleotide sequence ID" value="NC_009049.1"/>
</dbReference>
<dbReference type="SMR" id="A3PKG3"/>
<dbReference type="KEGG" id="rsh:Rsph17029_1719"/>
<dbReference type="HOGENOM" id="CLU_125463_1_0_5"/>
<dbReference type="GO" id="GO:0030694">
    <property type="term" value="C:bacterial-type flagellum basal body, rod"/>
    <property type="evidence" value="ECO:0007669"/>
    <property type="project" value="InterPro"/>
</dbReference>
<dbReference type="GO" id="GO:0071978">
    <property type="term" value="P:bacterial-type flagellum-dependent swarming motility"/>
    <property type="evidence" value="ECO:0007669"/>
    <property type="project" value="TreeGrafter"/>
</dbReference>
<dbReference type="InterPro" id="IPR019776">
    <property type="entry name" value="Flagellar_basal_body_rod_CS"/>
</dbReference>
<dbReference type="InterPro" id="IPR006300">
    <property type="entry name" value="FlgB"/>
</dbReference>
<dbReference type="NCBIfam" id="TIGR01396">
    <property type="entry name" value="FlgB"/>
    <property type="match status" value="1"/>
</dbReference>
<dbReference type="PANTHER" id="PTHR30435:SF12">
    <property type="entry name" value="FLAGELLAR BASAL BODY ROD PROTEIN FLGB"/>
    <property type="match status" value="1"/>
</dbReference>
<dbReference type="PANTHER" id="PTHR30435">
    <property type="entry name" value="FLAGELLAR PROTEIN"/>
    <property type="match status" value="1"/>
</dbReference>
<dbReference type="PIRSF" id="PIRSF002889">
    <property type="entry name" value="Rod_FlgB"/>
    <property type="match status" value="1"/>
</dbReference>
<dbReference type="PROSITE" id="PS00588">
    <property type="entry name" value="FLAGELLA_BB_ROD"/>
    <property type="match status" value="1"/>
</dbReference>
<reference evidence="4" key="1">
    <citation type="submission" date="2007-02" db="EMBL/GenBank/DDBJ databases">
        <title>Complete sequence of chromosome 1 of Rhodobacter sphaeroides ATCC 17029.</title>
        <authorList>
            <person name="Copeland A."/>
            <person name="Lucas S."/>
            <person name="Lapidus A."/>
            <person name="Barry K."/>
            <person name="Detter J.C."/>
            <person name="Glavina del Rio T."/>
            <person name="Hammon N."/>
            <person name="Israni S."/>
            <person name="Dalin E."/>
            <person name="Tice H."/>
            <person name="Pitluck S."/>
            <person name="Kiss H."/>
            <person name="Brettin T."/>
            <person name="Bruce D."/>
            <person name="Han C."/>
            <person name="Tapia R."/>
            <person name="Gilna P."/>
            <person name="Schmutz J."/>
            <person name="Larimer F."/>
            <person name="Land M."/>
            <person name="Hauser L."/>
            <person name="Kyrpides N."/>
            <person name="Mikhailova N."/>
            <person name="Richardson P."/>
            <person name="Mackenzie C."/>
            <person name="Choudhary M."/>
            <person name="Donohue T.J."/>
            <person name="Kaplan S."/>
        </authorList>
    </citation>
    <scope>NUCLEOTIDE SEQUENCE [LARGE SCALE GENOMIC DNA]</scope>
    <source>
        <strain evidence="4">ATCC 17029 / ATH 2.4.9</strain>
    </source>
</reference>
<accession>A3PKG3</accession>
<protein>
    <recommendedName>
        <fullName evidence="1 4">Flagellar basal body rod protein FlgB</fullName>
    </recommendedName>
</protein>
<organism>
    <name type="scientific">Cereibacter sphaeroides (strain ATCC 17029 / ATH 2.4.9)</name>
    <name type="common">Rhodobacter sphaeroides</name>
    <dbReference type="NCBI Taxonomy" id="349101"/>
    <lineage>
        <taxon>Bacteria</taxon>
        <taxon>Pseudomonadati</taxon>
        <taxon>Pseudomonadota</taxon>
        <taxon>Alphaproteobacteria</taxon>
        <taxon>Rhodobacterales</taxon>
        <taxon>Paracoccaceae</taxon>
        <taxon>Cereibacter</taxon>
    </lineage>
</organism>
<proteinExistence type="inferred from homology"/>
<feature type="chain" id="PRO_0000415707" description="Flagellar basal body rod protein FlgB">
    <location>
        <begin position="1"/>
        <end position="128"/>
    </location>
</feature>
<comment type="function">
    <text evidence="1">Structural component of flagellum, the bacterial motility apparatus. Part of the rod structure of flagellar basal body (By similarity).</text>
</comment>
<comment type="subunit">
    <text evidence="1">The basal body constitutes a major portion of the flagellar organelle and consists of a number of rings mounted on a central rod. In Gram-negative bacteria, at least four rings, L, P, S and M are present, whereas Gram-positive bacteria lack the L and P rings. The rod consists of about 26 subunits of FlgG in the distal portion, and FlgB, FlgC and FlgF build up the proximal portion of the rod with about 6 subunits each. Rod assembly occurs by export via the flagellum-specific pathway of its constituent proteins and by their incorporation into the rod structure in the probable order of FlgB, FlgC, FlgF and FlgG. Another protein, FliE, also assembles onto the stable rod structure (By similarity).</text>
</comment>
<comment type="subcellular location">
    <subcellularLocation>
        <location evidence="1">Bacterial flagellum basal body</location>
    </subcellularLocation>
</comment>
<comment type="similarity">
    <text evidence="3">Belongs to the flagella basal body rod proteins family.</text>
</comment>
<sequence>MTGFRDQLGVHAQALVLRETRNNLLTSNIANAATPHYKARDIDFGAELARASGNGTLRTTEARHFAAGGPAARGEALYRDPVSPSLDGNTVEMAVEQMEFAENTLRYQTSLALLNRRISGLMTAIKGE</sequence>
<evidence type="ECO:0000250" key="1">
    <source>
        <dbReference type="UniProtKB" id="P16437"/>
    </source>
</evidence>
<evidence type="ECO:0000250" key="2">
    <source>
        <dbReference type="UniProtKB" id="Q8VLR6"/>
    </source>
</evidence>
<evidence type="ECO:0000255" key="3"/>
<evidence type="ECO:0000312" key="4">
    <source>
        <dbReference type="EMBL" id="ABN76829.1"/>
    </source>
</evidence>
<name>FLGB_CERS1</name>